<dbReference type="EC" id="4.1.1.65" evidence="1"/>
<dbReference type="EMBL" id="CP000388">
    <property type="protein sequence ID" value="ABG41985.1"/>
    <property type="molecule type" value="Genomic_DNA"/>
</dbReference>
<dbReference type="RefSeq" id="WP_011576213.1">
    <property type="nucleotide sequence ID" value="NC_008228.1"/>
</dbReference>
<dbReference type="SMR" id="Q15Q53"/>
<dbReference type="STRING" id="342610.Patl_3483"/>
<dbReference type="KEGG" id="pat:Patl_3483"/>
<dbReference type="eggNOG" id="COG0688">
    <property type="taxonomic scope" value="Bacteria"/>
</dbReference>
<dbReference type="HOGENOM" id="CLU_029061_4_1_6"/>
<dbReference type="OrthoDB" id="9802030at2"/>
<dbReference type="UniPathway" id="UPA00558">
    <property type="reaction ID" value="UER00616"/>
</dbReference>
<dbReference type="Proteomes" id="UP000001981">
    <property type="component" value="Chromosome"/>
</dbReference>
<dbReference type="GO" id="GO:0005886">
    <property type="term" value="C:plasma membrane"/>
    <property type="evidence" value="ECO:0007669"/>
    <property type="project" value="UniProtKB-SubCell"/>
</dbReference>
<dbReference type="GO" id="GO:0004609">
    <property type="term" value="F:phosphatidylserine decarboxylase activity"/>
    <property type="evidence" value="ECO:0007669"/>
    <property type="project" value="UniProtKB-UniRule"/>
</dbReference>
<dbReference type="GO" id="GO:0006646">
    <property type="term" value="P:phosphatidylethanolamine biosynthetic process"/>
    <property type="evidence" value="ECO:0007669"/>
    <property type="project" value="UniProtKB-UniRule"/>
</dbReference>
<dbReference type="HAMAP" id="MF_00662">
    <property type="entry name" value="PS_decarb_PSD_B_type1"/>
    <property type="match status" value="1"/>
</dbReference>
<dbReference type="InterPro" id="IPR003817">
    <property type="entry name" value="PS_Dcarbxylase"/>
</dbReference>
<dbReference type="InterPro" id="IPR033177">
    <property type="entry name" value="PSD-B"/>
</dbReference>
<dbReference type="InterPro" id="IPR033178">
    <property type="entry name" value="PSD_type1_pro"/>
</dbReference>
<dbReference type="NCBIfam" id="TIGR00163">
    <property type="entry name" value="PS_decarb"/>
    <property type="match status" value="1"/>
</dbReference>
<dbReference type="PANTHER" id="PTHR10067">
    <property type="entry name" value="PHOSPHATIDYLSERINE DECARBOXYLASE"/>
    <property type="match status" value="1"/>
</dbReference>
<dbReference type="PANTHER" id="PTHR10067:SF6">
    <property type="entry name" value="PHOSPHATIDYLSERINE DECARBOXYLASE PROENZYME, MITOCHONDRIAL"/>
    <property type="match status" value="1"/>
</dbReference>
<dbReference type="Pfam" id="PF02666">
    <property type="entry name" value="PS_Dcarbxylase"/>
    <property type="match status" value="1"/>
</dbReference>
<proteinExistence type="inferred from homology"/>
<organism>
    <name type="scientific">Pseudoalteromonas atlantica (strain T6c / ATCC BAA-1087)</name>
    <dbReference type="NCBI Taxonomy" id="3042615"/>
    <lineage>
        <taxon>Bacteria</taxon>
        <taxon>Pseudomonadati</taxon>
        <taxon>Pseudomonadota</taxon>
        <taxon>Gammaproteobacteria</taxon>
        <taxon>Alteromonadales</taxon>
        <taxon>Alteromonadaceae</taxon>
        <taxon>Paraglaciecola</taxon>
    </lineage>
</organism>
<sequence length="286" mass="31273">MFDSIKIALQYITPKHLISRLVGKLAAAKAGGLTTGLIKLFIKQYKVNMAEAERENPADYASFNEFFTRALKDDARVICPNEQDLAMPVDGAVSQLGDIKHDSIFQAKGHDYSLTTLLGGKPELATAFKNGKFATVYLSPKDYHRIHMPMDGQLTDMVYVPGELFSVSPLTAERVPGLFARNERVVAIFDTPKGKMAMVLVGATIVASIETVWAGTVSPPVGKNVVHWQYPSEGEDAVFLKKGDELGRFKLGSTIVACFEPDMVEFADYSAGDDTRLGDVFATLTQ</sequence>
<protein>
    <recommendedName>
        <fullName evidence="1">Phosphatidylserine decarboxylase proenzyme</fullName>
        <ecNumber evidence="1">4.1.1.65</ecNumber>
    </recommendedName>
    <component>
        <recommendedName>
            <fullName evidence="1">Phosphatidylserine decarboxylase alpha chain</fullName>
        </recommendedName>
    </component>
    <component>
        <recommendedName>
            <fullName evidence="1">Phosphatidylserine decarboxylase beta chain</fullName>
        </recommendedName>
    </component>
</protein>
<name>PSD_PSEA6</name>
<gene>
    <name evidence="1" type="primary">psd</name>
    <name type="ordered locus">Patl_3483</name>
</gene>
<reference key="1">
    <citation type="submission" date="2006-06" db="EMBL/GenBank/DDBJ databases">
        <title>Complete sequence of Pseudoalteromonas atlantica T6c.</title>
        <authorList>
            <consortium name="US DOE Joint Genome Institute"/>
            <person name="Copeland A."/>
            <person name="Lucas S."/>
            <person name="Lapidus A."/>
            <person name="Barry K."/>
            <person name="Detter J.C."/>
            <person name="Glavina del Rio T."/>
            <person name="Hammon N."/>
            <person name="Israni S."/>
            <person name="Dalin E."/>
            <person name="Tice H."/>
            <person name="Pitluck S."/>
            <person name="Saunders E."/>
            <person name="Brettin T."/>
            <person name="Bruce D."/>
            <person name="Han C."/>
            <person name="Tapia R."/>
            <person name="Gilna P."/>
            <person name="Schmutz J."/>
            <person name="Larimer F."/>
            <person name="Land M."/>
            <person name="Hauser L."/>
            <person name="Kyrpides N."/>
            <person name="Kim E."/>
            <person name="Karls A.C."/>
            <person name="Bartlett D."/>
            <person name="Higgins B.P."/>
            <person name="Richardson P."/>
        </authorList>
    </citation>
    <scope>NUCLEOTIDE SEQUENCE [LARGE SCALE GENOMIC DNA]</scope>
    <source>
        <strain>T6c / ATCC BAA-1087</strain>
    </source>
</reference>
<evidence type="ECO:0000255" key="1">
    <source>
        <dbReference type="HAMAP-Rule" id="MF_00662"/>
    </source>
</evidence>
<comment type="function">
    <text evidence="1">Catalyzes the formation of phosphatidylethanolamine (PtdEtn) from phosphatidylserine (PtdSer).</text>
</comment>
<comment type="catalytic activity">
    <reaction evidence="1">
        <text>a 1,2-diacyl-sn-glycero-3-phospho-L-serine + H(+) = a 1,2-diacyl-sn-glycero-3-phosphoethanolamine + CO2</text>
        <dbReference type="Rhea" id="RHEA:20828"/>
        <dbReference type="ChEBI" id="CHEBI:15378"/>
        <dbReference type="ChEBI" id="CHEBI:16526"/>
        <dbReference type="ChEBI" id="CHEBI:57262"/>
        <dbReference type="ChEBI" id="CHEBI:64612"/>
        <dbReference type="EC" id="4.1.1.65"/>
    </reaction>
</comment>
<comment type="cofactor">
    <cofactor evidence="1">
        <name>pyruvate</name>
        <dbReference type="ChEBI" id="CHEBI:15361"/>
    </cofactor>
    <text evidence="1">Binds 1 pyruvoyl group covalently per subunit.</text>
</comment>
<comment type="pathway">
    <text evidence="1">Phospholipid metabolism; phosphatidylethanolamine biosynthesis; phosphatidylethanolamine from CDP-diacylglycerol: step 2/2.</text>
</comment>
<comment type="subunit">
    <text evidence="1">Heterodimer of a large membrane-associated beta subunit and a small pyruvoyl-containing alpha subunit.</text>
</comment>
<comment type="subcellular location">
    <subcellularLocation>
        <location evidence="1">Cell membrane</location>
        <topology evidence="1">Peripheral membrane protein</topology>
    </subcellularLocation>
</comment>
<comment type="PTM">
    <text evidence="1">Is synthesized initially as an inactive proenzyme. Formation of the active enzyme involves a self-maturation process in which the active site pyruvoyl group is generated from an internal serine residue via an autocatalytic post-translational modification. Two non-identical subunits are generated from the proenzyme in this reaction, and the pyruvate is formed at the N-terminus of the alpha chain, which is derived from the carboxyl end of the proenzyme. The autoendoproteolytic cleavage occurs by a canonical serine protease mechanism, in which the side chain hydroxyl group of the serine supplies its oxygen atom to form the C-terminus of the beta chain, while the remainder of the serine residue undergoes an oxidative deamination to produce ammonia and the pyruvoyl prosthetic group on the alpha chain. During this reaction, the Ser that is part of the protease active site of the proenzyme becomes the pyruvoyl prosthetic group, which constitutes an essential element of the active site of the mature decarboxylase.</text>
</comment>
<comment type="similarity">
    <text evidence="1">Belongs to the phosphatidylserine decarboxylase family. PSD-B subfamily. Prokaryotic type I sub-subfamily.</text>
</comment>
<keyword id="KW-1003">Cell membrane</keyword>
<keyword id="KW-0210">Decarboxylase</keyword>
<keyword id="KW-0444">Lipid biosynthesis</keyword>
<keyword id="KW-0443">Lipid metabolism</keyword>
<keyword id="KW-0456">Lyase</keyword>
<keyword id="KW-0472">Membrane</keyword>
<keyword id="KW-0594">Phospholipid biosynthesis</keyword>
<keyword id="KW-1208">Phospholipid metabolism</keyword>
<keyword id="KW-0670">Pyruvate</keyword>
<keyword id="KW-0865">Zymogen</keyword>
<accession>Q15Q53</accession>
<feature type="chain" id="PRO_0000262133" description="Phosphatidylserine decarboxylase beta chain" evidence="1">
    <location>
        <begin position="1"/>
        <end position="252"/>
    </location>
</feature>
<feature type="chain" id="PRO_0000262134" description="Phosphatidylserine decarboxylase alpha chain" evidence="1">
    <location>
        <begin position="253"/>
        <end position="286"/>
    </location>
</feature>
<feature type="active site" description="Charge relay system; for autoendoproteolytic cleavage activity" evidence="1">
    <location>
        <position position="90"/>
    </location>
</feature>
<feature type="active site" description="Charge relay system; for autoendoproteolytic cleavage activity" evidence="1">
    <location>
        <position position="147"/>
    </location>
</feature>
<feature type="active site" description="Charge relay system; for autoendoproteolytic cleavage activity" evidence="1">
    <location>
        <position position="253"/>
    </location>
</feature>
<feature type="active site" description="Schiff-base intermediate with substrate; via pyruvic acid; for decarboxylase activity" evidence="1">
    <location>
        <position position="253"/>
    </location>
</feature>
<feature type="site" description="Cleavage (non-hydrolytic); by autocatalysis" evidence="1">
    <location>
        <begin position="252"/>
        <end position="253"/>
    </location>
</feature>
<feature type="modified residue" description="Pyruvic acid (Ser); by autocatalysis" evidence="1">
    <location>
        <position position="253"/>
    </location>
</feature>